<accession>Q0CXN3</accession>
<protein>
    <recommendedName>
        <fullName evidence="1">Eukaryotic translation initiation factor 3 subunit K</fullName>
        <shortName evidence="1">eIF3k</shortName>
    </recommendedName>
    <alternativeName>
        <fullName evidence="1">eIF-3 p25</fullName>
    </alternativeName>
</protein>
<organism>
    <name type="scientific">Aspergillus terreus (strain NIH 2624 / FGSC A1156)</name>
    <dbReference type="NCBI Taxonomy" id="341663"/>
    <lineage>
        <taxon>Eukaryota</taxon>
        <taxon>Fungi</taxon>
        <taxon>Dikarya</taxon>
        <taxon>Ascomycota</taxon>
        <taxon>Pezizomycotina</taxon>
        <taxon>Eurotiomycetes</taxon>
        <taxon>Eurotiomycetidae</taxon>
        <taxon>Eurotiales</taxon>
        <taxon>Aspergillaceae</taxon>
        <taxon>Aspergillus</taxon>
        <taxon>Aspergillus subgen. Circumdati</taxon>
    </lineage>
</organism>
<feature type="chain" id="PRO_0000365056" description="Eukaryotic translation initiation factor 3 subunit K">
    <location>
        <begin position="1"/>
        <end position="252"/>
    </location>
</feature>
<feature type="domain" description="PCI" evidence="2">
    <location>
        <begin position="46"/>
        <end position="225"/>
    </location>
</feature>
<evidence type="ECO:0000255" key="1">
    <source>
        <dbReference type="HAMAP-Rule" id="MF_03010"/>
    </source>
</evidence>
<evidence type="ECO:0000255" key="2">
    <source>
        <dbReference type="PROSITE-ProRule" id="PRU01185"/>
    </source>
</evidence>
<sequence length="252" mass="28201">MGVAFDKCETRPANIDAILNGLDRYNPETTTVFQDYVVQQCEDRTFDCYANLALLKLYQFNPHLLQPETVTNILAKALTVFPSPAFSLCLALLPAHTQPFPATNDEAQAASQTSDFVESVQKLARLSTLLESAQYAQFWSTLNSDDLYADLVADVAGFEELVRIRIAVEVGKTFREITADVLEQWLDLRSREALEKFVVEVCSWELDKSAPAGTVVKVPTNKENEARSEVKSERVGIEQFGRVLRRGFEQAA</sequence>
<name>EIF3K_ASPTN</name>
<dbReference type="EMBL" id="CH476595">
    <property type="protein sequence ID" value="EAU38308.1"/>
    <property type="molecule type" value="Genomic_DNA"/>
</dbReference>
<dbReference type="RefSeq" id="XP_001208916.1">
    <property type="nucleotide sequence ID" value="XM_001208916.1"/>
</dbReference>
<dbReference type="SMR" id="Q0CXN3"/>
<dbReference type="STRING" id="341663.Q0CXN3"/>
<dbReference type="EnsemblFungi" id="EAU38308">
    <property type="protein sequence ID" value="EAU38308"/>
    <property type="gene ID" value="ATEG_01551"/>
</dbReference>
<dbReference type="GeneID" id="4316350"/>
<dbReference type="VEuPathDB" id="FungiDB:ATEG_01551"/>
<dbReference type="eggNOG" id="KOG3252">
    <property type="taxonomic scope" value="Eukaryota"/>
</dbReference>
<dbReference type="HOGENOM" id="CLU_076723_0_1_1"/>
<dbReference type="OMA" id="GDDLCAD"/>
<dbReference type="OrthoDB" id="337745at2759"/>
<dbReference type="Proteomes" id="UP000007963">
    <property type="component" value="Unassembled WGS sequence"/>
</dbReference>
<dbReference type="GO" id="GO:0016282">
    <property type="term" value="C:eukaryotic 43S preinitiation complex"/>
    <property type="evidence" value="ECO:0007669"/>
    <property type="project" value="UniProtKB-UniRule"/>
</dbReference>
<dbReference type="GO" id="GO:0033290">
    <property type="term" value="C:eukaryotic 48S preinitiation complex"/>
    <property type="evidence" value="ECO:0007669"/>
    <property type="project" value="UniProtKB-UniRule"/>
</dbReference>
<dbReference type="GO" id="GO:0005852">
    <property type="term" value="C:eukaryotic translation initiation factor 3 complex"/>
    <property type="evidence" value="ECO:0007669"/>
    <property type="project" value="UniProtKB-UniRule"/>
</dbReference>
<dbReference type="GO" id="GO:0043022">
    <property type="term" value="F:ribosome binding"/>
    <property type="evidence" value="ECO:0007669"/>
    <property type="project" value="InterPro"/>
</dbReference>
<dbReference type="GO" id="GO:0003723">
    <property type="term" value="F:RNA binding"/>
    <property type="evidence" value="ECO:0007669"/>
    <property type="project" value="UniProtKB-UniRule"/>
</dbReference>
<dbReference type="GO" id="GO:0003743">
    <property type="term" value="F:translation initiation factor activity"/>
    <property type="evidence" value="ECO:0007669"/>
    <property type="project" value="UniProtKB-UniRule"/>
</dbReference>
<dbReference type="GO" id="GO:0001732">
    <property type="term" value="P:formation of cytoplasmic translation initiation complex"/>
    <property type="evidence" value="ECO:0007669"/>
    <property type="project" value="UniProtKB-UniRule"/>
</dbReference>
<dbReference type="GO" id="GO:0006446">
    <property type="term" value="P:regulation of translational initiation"/>
    <property type="evidence" value="ECO:0007669"/>
    <property type="project" value="InterPro"/>
</dbReference>
<dbReference type="FunFam" id="1.10.10.10:FF:000389">
    <property type="entry name" value="Eukaryotic translation initiation factor 3 subunit K"/>
    <property type="match status" value="1"/>
</dbReference>
<dbReference type="FunFam" id="1.25.40.250:FF:000003">
    <property type="entry name" value="Eukaryotic translation initiation factor 3 subunit K"/>
    <property type="match status" value="1"/>
</dbReference>
<dbReference type="Gene3D" id="1.25.40.250">
    <property type="entry name" value="ARM repeat, domain 1"/>
    <property type="match status" value="1"/>
</dbReference>
<dbReference type="Gene3D" id="1.10.10.10">
    <property type="entry name" value="Winged helix-like DNA-binding domain superfamily/Winged helix DNA-binding domain"/>
    <property type="match status" value="1"/>
</dbReference>
<dbReference type="HAMAP" id="MF_03010">
    <property type="entry name" value="eIF3k"/>
    <property type="match status" value="1"/>
</dbReference>
<dbReference type="InterPro" id="IPR016024">
    <property type="entry name" value="ARM-type_fold"/>
</dbReference>
<dbReference type="InterPro" id="IPR033464">
    <property type="entry name" value="CSN8_PSD8_EIF3K"/>
</dbReference>
<dbReference type="InterPro" id="IPR009374">
    <property type="entry name" value="eIF3k"/>
</dbReference>
<dbReference type="InterPro" id="IPR000717">
    <property type="entry name" value="PCI_dom"/>
</dbReference>
<dbReference type="InterPro" id="IPR016020">
    <property type="entry name" value="Transl_init_fac_sub12_N_euk"/>
</dbReference>
<dbReference type="InterPro" id="IPR036388">
    <property type="entry name" value="WH-like_DNA-bd_sf"/>
</dbReference>
<dbReference type="InterPro" id="IPR036390">
    <property type="entry name" value="WH_DNA-bd_sf"/>
</dbReference>
<dbReference type="PANTHER" id="PTHR13022">
    <property type="entry name" value="EUKARYOTIC TRANSLATION INITIATION FACTOR 3 SUBUNIT 11"/>
    <property type="match status" value="1"/>
</dbReference>
<dbReference type="PANTHER" id="PTHR13022:SF0">
    <property type="entry name" value="EUKARYOTIC TRANSLATION INITIATION FACTOR 3 SUBUNIT K"/>
    <property type="match status" value="1"/>
</dbReference>
<dbReference type="Pfam" id="PF10075">
    <property type="entry name" value="CSN8_PSD8_EIF3K"/>
    <property type="match status" value="1"/>
</dbReference>
<dbReference type="SUPFAM" id="SSF48371">
    <property type="entry name" value="ARM repeat"/>
    <property type="match status" value="1"/>
</dbReference>
<dbReference type="SUPFAM" id="SSF46785">
    <property type="entry name" value="Winged helix' DNA-binding domain"/>
    <property type="match status" value="1"/>
</dbReference>
<dbReference type="PROSITE" id="PS50250">
    <property type="entry name" value="PCI"/>
    <property type="match status" value="1"/>
</dbReference>
<comment type="function">
    <text evidence="1">Component of the eukaryotic translation initiation factor 3 (eIF-3) complex, which is involved in protein synthesis of a specialized repertoire of mRNAs and, together with other initiation factors, stimulates binding of mRNA and methionyl-tRNAi to the 40S ribosome. The eIF-3 complex specifically targets and initiates translation of a subset of mRNAs involved in cell proliferation.</text>
</comment>
<comment type="subunit">
    <text evidence="1">Component of the eukaryotic translation initiation factor 3 (eIF-3) complex.</text>
</comment>
<comment type="subcellular location">
    <subcellularLocation>
        <location evidence="1">Cytoplasm</location>
    </subcellularLocation>
</comment>
<comment type="similarity">
    <text evidence="1">Belongs to the eIF-3 subunit K family.</text>
</comment>
<keyword id="KW-0963">Cytoplasm</keyword>
<keyword id="KW-0396">Initiation factor</keyword>
<keyword id="KW-0648">Protein biosynthesis</keyword>
<keyword id="KW-1185">Reference proteome</keyword>
<reference key="1">
    <citation type="submission" date="2005-09" db="EMBL/GenBank/DDBJ databases">
        <title>Annotation of the Aspergillus terreus NIH2624 genome.</title>
        <authorList>
            <person name="Birren B.W."/>
            <person name="Lander E.S."/>
            <person name="Galagan J.E."/>
            <person name="Nusbaum C."/>
            <person name="Devon K."/>
            <person name="Henn M."/>
            <person name="Ma L.-J."/>
            <person name="Jaffe D.B."/>
            <person name="Butler J."/>
            <person name="Alvarez P."/>
            <person name="Gnerre S."/>
            <person name="Grabherr M."/>
            <person name="Kleber M."/>
            <person name="Mauceli E.W."/>
            <person name="Brockman W."/>
            <person name="Rounsley S."/>
            <person name="Young S.K."/>
            <person name="LaButti K."/>
            <person name="Pushparaj V."/>
            <person name="DeCaprio D."/>
            <person name="Crawford M."/>
            <person name="Koehrsen M."/>
            <person name="Engels R."/>
            <person name="Montgomery P."/>
            <person name="Pearson M."/>
            <person name="Howarth C."/>
            <person name="Larson L."/>
            <person name="Luoma S."/>
            <person name="White J."/>
            <person name="Alvarado L."/>
            <person name="Kodira C.D."/>
            <person name="Zeng Q."/>
            <person name="Oleary S."/>
            <person name="Yandava C."/>
            <person name="Denning D.W."/>
            <person name="Nierman W.C."/>
            <person name="Milne T."/>
            <person name="Madden K."/>
        </authorList>
    </citation>
    <scope>NUCLEOTIDE SEQUENCE [LARGE SCALE GENOMIC DNA]</scope>
    <source>
        <strain>NIH 2624 / FGSC A1156</strain>
    </source>
</reference>
<proteinExistence type="inferred from homology"/>
<gene>
    <name type="ORF">ATEG_01551</name>
</gene>